<dbReference type="EMBL" id="AF169410">
    <property type="protein sequence ID" value="AAF89671.1"/>
    <property type="molecule type" value="mRNA"/>
</dbReference>
<dbReference type="EMBL" id="AF169409">
    <property type="protein sequence ID" value="AAF89670.1"/>
    <property type="molecule type" value="mRNA"/>
</dbReference>
<dbReference type="PIR" id="JC7385">
    <property type="entry name" value="JC7385"/>
</dbReference>
<dbReference type="RefSeq" id="NP_542964.1">
    <property type="nucleotide sequence ID" value="NM_080786.2"/>
</dbReference>
<dbReference type="RefSeq" id="XP_006229789.1">
    <property type="nucleotide sequence ID" value="XM_006229727.3"/>
</dbReference>
<dbReference type="RefSeq" id="XP_006229790.1">
    <property type="nucleotide sequence ID" value="XM_006229728.3"/>
</dbReference>
<dbReference type="SMR" id="Q9JHI3"/>
<dbReference type="FunCoup" id="Q9JHI3">
    <property type="interactions" value="212"/>
</dbReference>
<dbReference type="STRING" id="10116.ENSRNOP00000024281"/>
<dbReference type="BindingDB" id="Q9JHI3"/>
<dbReference type="ChEMBL" id="CHEMBL2073698"/>
<dbReference type="TCDB" id="2.A.60.1.7">
    <property type="family name" value="the organo anion transporter (oat) family"/>
</dbReference>
<dbReference type="GlyCosmos" id="Q9JHI3">
    <property type="glycosylation" value="4 sites, No reported glycans"/>
</dbReference>
<dbReference type="GlyGen" id="Q9JHI3">
    <property type="glycosylation" value="4 sites"/>
</dbReference>
<dbReference type="iPTMnet" id="Q9JHI3"/>
<dbReference type="PhosphoSitePlus" id="Q9JHI3"/>
<dbReference type="PaxDb" id="10116-ENSRNOP00000024281"/>
<dbReference type="GeneID" id="140860"/>
<dbReference type="KEGG" id="rno:140860"/>
<dbReference type="UCSC" id="RGD:621391">
    <property type="organism name" value="rat"/>
</dbReference>
<dbReference type="AGR" id="RGD:621391"/>
<dbReference type="CTD" id="11309"/>
<dbReference type="RGD" id="621391">
    <property type="gene designation" value="Slco2b1"/>
</dbReference>
<dbReference type="VEuPathDB" id="HostDB:ENSRNOG00000017976"/>
<dbReference type="eggNOG" id="KOG3626">
    <property type="taxonomic scope" value="Eukaryota"/>
</dbReference>
<dbReference type="HOGENOM" id="CLU_008954_4_1_1"/>
<dbReference type="InParanoid" id="Q9JHI3"/>
<dbReference type="OrthoDB" id="5062115at2759"/>
<dbReference type="PhylomeDB" id="Q9JHI3"/>
<dbReference type="Reactome" id="R-RNO-189483">
    <property type="pathway name" value="Heme degradation"/>
</dbReference>
<dbReference type="Reactome" id="R-RNO-879518">
    <property type="pathway name" value="Transport of organic anions"/>
</dbReference>
<dbReference type="Reactome" id="R-RNO-9749641">
    <property type="pathway name" value="Aspirin ADME"/>
</dbReference>
<dbReference type="Reactome" id="R-RNO-9754706">
    <property type="pathway name" value="Atorvastatin ADME"/>
</dbReference>
<dbReference type="PRO" id="PR:Q9JHI3"/>
<dbReference type="Proteomes" id="UP000002494">
    <property type="component" value="Chromosome 1"/>
</dbReference>
<dbReference type="Bgee" id="ENSRNOG00000017976">
    <property type="expression patterns" value="Expressed in liver and 19 other cell types or tissues"/>
</dbReference>
<dbReference type="ExpressionAtlas" id="Q9JHI3">
    <property type="expression patterns" value="baseline and differential"/>
</dbReference>
<dbReference type="GO" id="GO:0016324">
    <property type="term" value="C:apical plasma membrane"/>
    <property type="evidence" value="ECO:0000314"/>
    <property type="project" value="ARUK-UCL"/>
</dbReference>
<dbReference type="GO" id="GO:0009925">
    <property type="term" value="C:basal plasma membrane"/>
    <property type="evidence" value="ECO:0000250"/>
    <property type="project" value="UniProtKB"/>
</dbReference>
<dbReference type="GO" id="GO:0016323">
    <property type="term" value="C:basolateral plasma membrane"/>
    <property type="evidence" value="ECO:0000318"/>
    <property type="project" value="GO_Central"/>
</dbReference>
<dbReference type="GO" id="GO:0005886">
    <property type="term" value="C:plasma membrane"/>
    <property type="evidence" value="ECO:0000266"/>
    <property type="project" value="RGD"/>
</dbReference>
<dbReference type="GO" id="GO:0015125">
    <property type="term" value="F:bile acid transmembrane transporter activity"/>
    <property type="evidence" value="ECO:0000314"/>
    <property type="project" value="RGD"/>
</dbReference>
<dbReference type="GO" id="GO:0008514">
    <property type="term" value="F:organic anion transmembrane transporter activity"/>
    <property type="evidence" value="ECO:0000314"/>
    <property type="project" value="UniProtKB"/>
</dbReference>
<dbReference type="GO" id="GO:0015132">
    <property type="term" value="F:prostaglandin transmembrane transporter activity"/>
    <property type="evidence" value="ECO:0000266"/>
    <property type="project" value="RGD"/>
</dbReference>
<dbReference type="GO" id="GO:0015347">
    <property type="term" value="F:sodium-independent organic anion transmembrane transporter activity"/>
    <property type="evidence" value="ECO:0000314"/>
    <property type="project" value="RGD"/>
</dbReference>
<dbReference type="GO" id="GO:0022857">
    <property type="term" value="F:transmembrane transporter activity"/>
    <property type="evidence" value="ECO:0000266"/>
    <property type="project" value="RGD"/>
</dbReference>
<dbReference type="GO" id="GO:0015721">
    <property type="term" value="P:bile acid and bile salt transport"/>
    <property type="evidence" value="ECO:0000314"/>
    <property type="project" value="RGD"/>
</dbReference>
<dbReference type="GO" id="GO:0001889">
    <property type="term" value="P:liver development"/>
    <property type="evidence" value="ECO:0000270"/>
    <property type="project" value="RGD"/>
</dbReference>
<dbReference type="GO" id="GO:0006811">
    <property type="term" value="P:monoatomic ion transport"/>
    <property type="evidence" value="ECO:0007669"/>
    <property type="project" value="UniProtKB-KW"/>
</dbReference>
<dbReference type="GO" id="GO:0015711">
    <property type="term" value="P:organic anion transport"/>
    <property type="evidence" value="ECO:0000266"/>
    <property type="project" value="RGD"/>
</dbReference>
<dbReference type="GO" id="GO:0071718">
    <property type="term" value="P:sodium-independent icosanoid transport"/>
    <property type="evidence" value="ECO:0000314"/>
    <property type="project" value="RGD"/>
</dbReference>
<dbReference type="GO" id="GO:0043252">
    <property type="term" value="P:sodium-independent organic anion transport"/>
    <property type="evidence" value="ECO:0000318"/>
    <property type="project" value="GO_Central"/>
</dbReference>
<dbReference type="GO" id="GO:0055085">
    <property type="term" value="P:transmembrane transport"/>
    <property type="evidence" value="ECO:0000266"/>
    <property type="project" value="RGD"/>
</dbReference>
<dbReference type="Gene3D" id="1.20.1250.20">
    <property type="entry name" value="MFS general substrate transporter like domains"/>
    <property type="match status" value="1"/>
</dbReference>
<dbReference type="InterPro" id="IPR002350">
    <property type="entry name" value="Kazal_dom"/>
</dbReference>
<dbReference type="InterPro" id="IPR036259">
    <property type="entry name" value="MFS_trans_sf"/>
</dbReference>
<dbReference type="InterPro" id="IPR004156">
    <property type="entry name" value="OATP"/>
</dbReference>
<dbReference type="NCBIfam" id="TIGR00805">
    <property type="entry name" value="oat"/>
    <property type="match status" value="1"/>
</dbReference>
<dbReference type="PANTHER" id="PTHR11388">
    <property type="entry name" value="ORGANIC ANION TRANSPORTER"/>
    <property type="match status" value="1"/>
</dbReference>
<dbReference type="PANTHER" id="PTHR11388:SF87">
    <property type="entry name" value="SOLUTE CARRIER ORGANIC ANION TRANSPORTER FAMILY MEMBER 2B1"/>
    <property type="match status" value="1"/>
</dbReference>
<dbReference type="Pfam" id="PF03137">
    <property type="entry name" value="OATP"/>
    <property type="match status" value="1"/>
</dbReference>
<dbReference type="SUPFAM" id="SSF103473">
    <property type="entry name" value="MFS general substrate transporter"/>
    <property type="match status" value="1"/>
</dbReference>
<dbReference type="PROSITE" id="PS51465">
    <property type="entry name" value="KAZAL_2"/>
    <property type="match status" value="1"/>
</dbReference>
<gene>
    <name evidence="12" type="primary">Slco2b1</name>
    <name evidence="9" type="synonym">Oatp2b1</name>
    <name evidence="1" type="synonym">Slc21a9</name>
</gene>
<proteinExistence type="evidence at protein level"/>
<protein>
    <recommendedName>
        <fullName>Solute carrier organic anion transporter family member 2B1</fullName>
    </recommendedName>
    <alternativeName>
        <fullName evidence="8">Organic anion transporter moatp1</fullName>
    </alternativeName>
    <alternativeName>
        <fullName evidence="9">Organic anion transporting polypeptide 2B1</fullName>
        <shortName evidence="9">OATP2B1</shortName>
    </alternativeName>
    <alternativeName>
        <fullName evidence="1">Solute carrier family 21 member 9</fullName>
    </alternativeName>
</protein>
<evidence type="ECO:0000250" key="1">
    <source>
        <dbReference type="UniProtKB" id="O94956"/>
    </source>
</evidence>
<evidence type="ECO:0000250" key="2">
    <source>
        <dbReference type="UniProtKB" id="Q8BXB6"/>
    </source>
</evidence>
<evidence type="ECO:0000255" key="3"/>
<evidence type="ECO:0000255" key="4">
    <source>
        <dbReference type="PROSITE-ProRule" id="PRU00798"/>
    </source>
</evidence>
<evidence type="ECO:0000256" key="5">
    <source>
        <dbReference type="SAM" id="MobiDB-lite"/>
    </source>
</evidence>
<evidence type="ECO:0000269" key="6">
    <source>
    </source>
</evidence>
<evidence type="ECO:0000269" key="7">
    <source>
    </source>
</evidence>
<evidence type="ECO:0000303" key="8">
    <source>
    </source>
</evidence>
<evidence type="ECO:0000303" key="9">
    <source>
    </source>
</evidence>
<evidence type="ECO:0000305" key="10"/>
<evidence type="ECO:0000305" key="11">
    <source>
    </source>
</evidence>
<evidence type="ECO:0000312" key="12">
    <source>
        <dbReference type="RGD" id="621391"/>
    </source>
</evidence>
<evidence type="ECO:0007744" key="13">
    <source>
    </source>
</evidence>
<reference key="1">
    <citation type="journal article" date="2000" name="Biochem. Biophys. Res. Commun.">
        <title>Molecular identification of a rat novel organic anion transporter moat1, which transports prostaglandin D(2), leukotriene C(4), and taurocholate.</title>
        <authorList>
            <person name="Nishio T."/>
            <person name="Adachi H."/>
            <person name="Nakagomi R."/>
            <person name="Tokui T."/>
            <person name="Sato E."/>
            <person name="Tanemoto M."/>
            <person name="Fujiwara K."/>
            <person name="Okabe M."/>
            <person name="Onogawa T."/>
            <person name="Suzuki T."/>
            <person name="Nakai D."/>
            <person name="Shiiba K."/>
            <person name="Suzuki M."/>
            <person name="Ohtani H."/>
            <person name="Kondo Y."/>
            <person name="Unno M."/>
            <person name="Ito S."/>
            <person name="Iinuma K."/>
            <person name="Nunoki K."/>
            <person name="Matsuno S."/>
            <person name="Abe T."/>
        </authorList>
    </citation>
    <scope>NUCLEOTIDE SEQUENCE [MRNA]</scope>
    <scope>CHARACTERIZATION</scope>
    <scope>FUNCTION</scope>
    <scope>BIOPHYSICOCHEMICAL PROPERTIES</scope>
    <scope>TISSUE SPECIFICITY</scope>
    <source>
        <tissue>Brain</tissue>
    </source>
</reference>
<reference key="2">
    <citation type="journal article" date="2012" name="Nat. Commun.">
        <title>Quantitative maps of protein phosphorylation sites across 14 different rat organs and tissues.</title>
        <authorList>
            <person name="Lundby A."/>
            <person name="Secher A."/>
            <person name="Lage K."/>
            <person name="Nordsborg N.B."/>
            <person name="Dmytriyev A."/>
            <person name="Lundby C."/>
            <person name="Olsen J.V."/>
        </authorList>
    </citation>
    <scope>PHOSPHORYLATION [LARGE SCALE ANALYSIS] AT SER-311 AND SER-314</scope>
    <scope>IDENTIFICATION BY MASS SPECTROMETRY [LARGE SCALE ANALYSIS]</scope>
</reference>
<reference key="3">
    <citation type="journal article" date="2021" name="Drug Metab. Pharmacokinet.">
        <title>Differences in transport function of the human and rat orthologue of the Organic Anion Transporting Polypeptide 2B1 (OATP2B1).</title>
        <authorList>
            <person name="Hussner J."/>
            <person name="Foletti A."/>
            <person name="Seibert I."/>
            <person name="Fuchs A."/>
            <person name="Schuler E."/>
            <person name="Malagnino V."/>
            <person name="Grube M."/>
            <person name="Meyer Zu Schwabedissen H.E."/>
        </authorList>
    </citation>
    <scope>CAUTION</scope>
</reference>
<accession>Q9JHI3</accession>
<organism>
    <name type="scientific">Rattus norvegicus</name>
    <name type="common">Rat</name>
    <dbReference type="NCBI Taxonomy" id="10116"/>
    <lineage>
        <taxon>Eukaryota</taxon>
        <taxon>Metazoa</taxon>
        <taxon>Chordata</taxon>
        <taxon>Craniata</taxon>
        <taxon>Vertebrata</taxon>
        <taxon>Euteleostomi</taxon>
        <taxon>Mammalia</taxon>
        <taxon>Eutheria</taxon>
        <taxon>Euarchontoglires</taxon>
        <taxon>Glires</taxon>
        <taxon>Rodentia</taxon>
        <taxon>Myomorpha</taxon>
        <taxon>Muroidea</taxon>
        <taxon>Muridae</taxon>
        <taxon>Murinae</taxon>
        <taxon>Rattus</taxon>
    </lineage>
</organism>
<keyword id="KW-1003">Cell membrane</keyword>
<keyword id="KW-1015">Disulfide bond</keyword>
<keyword id="KW-0325">Glycoprotein</keyword>
<keyword id="KW-0406">Ion transport</keyword>
<keyword id="KW-0472">Membrane</keyword>
<keyword id="KW-0597">Phosphoprotein</keyword>
<keyword id="KW-1185">Reference proteome</keyword>
<keyword id="KW-0812">Transmembrane</keyword>
<keyword id="KW-1133">Transmembrane helix</keyword>
<keyword id="KW-0813">Transport</keyword>
<feature type="chain" id="PRO_0000191063" description="Solute carrier organic anion transporter family member 2B1">
    <location>
        <begin position="1"/>
        <end position="682"/>
    </location>
</feature>
<feature type="topological domain" description="Cytoplasmic" evidence="3">
    <location>
        <begin position="1"/>
        <end position="41"/>
    </location>
</feature>
<feature type="transmembrane region" description="Helical; Name=1" evidence="3">
    <location>
        <begin position="42"/>
        <end position="61"/>
    </location>
</feature>
<feature type="topological domain" description="Extracellular" evidence="3">
    <location>
        <begin position="62"/>
        <end position="80"/>
    </location>
</feature>
<feature type="transmembrane region" description="Helical; Name=2" evidence="3">
    <location>
        <begin position="81"/>
        <end position="101"/>
    </location>
</feature>
<feature type="topological domain" description="Cytoplasmic" evidence="3">
    <location>
        <begin position="102"/>
        <end position="107"/>
    </location>
</feature>
<feature type="transmembrane region" description="Helical; Name=3" evidence="3">
    <location>
        <begin position="108"/>
        <end position="132"/>
    </location>
</feature>
<feature type="topological domain" description="Extracellular" evidence="3">
    <location>
        <begin position="133"/>
        <end position="176"/>
    </location>
</feature>
<feature type="transmembrane region" description="Helical; Name=4" evidence="3">
    <location>
        <begin position="177"/>
        <end position="206"/>
    </location>
</feature>
<feature type="topological domain" description="Cytoplasmic" evidence="3">
    <location>
        <begin position="207"/>
        <end position="225"/>
    </location>
</feature>
<feature type="transmembrane region" description="Helical; Name=5" evidence="3">
    <location>
        <begin position="226"/>
        <end position="246"/>
    </location>
</feature>
<feature type="topological domain" description="Extracellular" evidence="3">
    <location>
        <begin position="247"/>
        <end position="264"/>
    </location>
</feature>
<feature type="transmembrane region" description="Helical; Name=6" evidence="3">
    <location>
        <begin position="265"/>
        <end position="289"/>
    </location>
</feature>
<feature type="topological domain" description="Cytoplasmic" evidence="3">
    <location>
        <begin position="290"/>
        <end position="354"/>
    </location>
</feature>
<feature type="transmembrane region" description="Helical; Name=7" evidence="3">
    <location>
        <begin position="355"/>
        <end position="376"/>
    </location>
</feature>
<feature type="topological domain" description="Extracellular" evidence="3">
    <location>
        <begin position="377"/>
        <end position="396"/>
    </location>
</feature>
<feature type="transmembrane region" description="Helical; Name=8" evidence="3">
    <location>
        <begin position="397"/>
        <end position="420"/>
    </location>
</feature>
<feature type="topological domain" description="Cytoplasmic" evidence="3">
    <location>
        <begin position="421"/>
        <end position="424"/>
    </location>
</feature>
<feature type="transmembrane region" description="Helical; Name=9" evidence="3">
    <location>
        <begin position="425"/>
        <end position="448"/>
    </location>
</feature>
<feature type="topological domain" description="Extracellular" evidence="3">
    <location>
        <begin position="449"/>
        <end position="552"/>
    </location>
</feature>
<feature type="transmembrane region" description="Helical; Name=10" evidence="3">
    <location>
        <begin position="553"/>
        <end position="575"/>
    </location>
</feature>
<feature type="topological domain" description="Cytoplasmic" evidence="3">
    <location>
        <begin position="576"/>
        <end position="584"/>
    </location>
</feature>
<feature type="transmembrane region" description="Helical; Name=11" evidence="3">
    <location>
        <begin position="585"/>
        <end position="610"/>
    </location>
</feature>
<feature type="topological domain" description="Extracellular" evidence="3">
    <location>
        <begin position="611"/>
        <end position="643"/>
    </location>
</feature>
<feature type="transmembrane region" description="Helical; Name=12" evidence="3">
    <location>
        <begin position="644"/>
        <end position="661"/>
    </location>
</feature>
<feature type="topological domain" description="Cytoplasmic" evidence="3">
    <location>
        <begin position="662"/>
        <end position="682"/>
    </location>
</feature>
<feature type="domain" description="Kazal-like" evidence="4">
    <location>
        <begin position="471"/>
        <end position="531"/>
    </location>
</feature>
<feature type="region of interest" description="Disordered" evidence="5">
    <location>
        <begin position="1"/>
        <end position="30"/>
    </location>
</feature>
<feature type="compositionally biased region" description="Basic and acidic residues" evidence="5">
    <location>
        <begin position="13"/>
        <end position="30"/>
    </location>
</feature>
<feature type="modified residue" description="Phosphoserine" evidence="2">
    <location>
        <position position="21"/>
    </location>
</feature>
<feature type="modified residue" description="Phosphoserine" evidence="13">
    <location>
        <position position="311"/>
    </location>
</feature>
<feature type="modified residue" description="Phosphoserine" evidence="13">
    <location>
        <position position="314"/>
    </location>
</feature>
<feature type="glycosylation site" description="N-linked (GlcNAc...) asparagine" evidence="3">
    <location>
        <position position="165"/>
    </location>
</feature>
<feature type="glycosylation site" description="N-linked (GlcNAc...) asparagine" evidence="3">
    <location>
        <position position="255"/>
    </location>
</feature>
<feature type="glycosylation site" description="N-linked (GlcNAc...) asparagine" evidence="3">
    <location>
        <position position="526"/>
    </location>
</feature>
<feature type="glycosylation site" description="N-linked (GlcNAc...) asparagine" evidence="3">
    <location>
        <position position="533"/>
    </location>
</feature>
<feature type="disulfide bond" evidence="4">
    <location>
        <begin position="477"/>
        <end position="508"/>
    </location>
</feature>
<feature type="disulfide bond" evidence="4">
    <location>
        <begin position="483"/>
        <end position="504"/>
    </location>
</feature>
<feature type="disulfide bond" evidence="4">
    <location>
        <begin position="492"/>
        <end position="529"/>
    </location>
</feature>
<name>SO2B1_RAT</name>
<comment type="function">
    <text evidence="1 6">Mediates the Na(+)-independent transport of organic anions such as taurocholate, the prostaglandins D2 (PGD2), E1 (PGE1) and E2 (PGE2), leukotriene C4, thromboxane B2 and L-thyroxine (PubMed:10973807). Also plays a role in the reuptake of neuropeptides such as substance P/TAC1 and vasoactive intestinal peptide/VIP released from retinal neurons. May act as a heme transporter that promotes cellular iron availability. Also transports heme by-product coproporphyrin III (CPIII), and may be involved in their hepatic disposition (By similarity). May contribute to regulate the transport of organic compounds in testis across the blood-testis-barrier (By similarity). Shows a pH-sensitive substrate specificity which may be ascribed to the protonation state of the binding site and leads to a stimulation of substrate transport in an acidic microenvironment. The exact transport mechanism has not been yet deciphered but most likely involves an anion exchange, coupling the cellular uptake of organic substrate with the efflux of an anionic compound. Hydrogencarbonate/HCO3(-) acts as a probable counteranion that exchanges for organic anions. Cytoplasmic glutamate may also act as counteranion in the placenta (By similarity).</text>
</comment>
<comment type="catalytic activity">
    <reaction evidence="1">
        <text>coproporphyrin III(out) = coproporphyrin III(in)</text>
        <dbReference type="Rhea" id="RHEA:74363"/>
        <dbReference type="ChEBI" id="CHEBI:131725"/>
    </reaction>
</comment>
<comment type="catalytic activity">
    <reaction evidence="1">
        <text>substance P(out) = substance P(in)</text>
        <dbReference type="Rhea" id="RHEA:74367"/>
        <dbReference type="ChEBI" id="CHEBI:190692"/>
    </reaction>
</comment>
<comment type="catalytic activity">
    <reaction evidence="11">
        <text>taurocholate(out) = taurocholate(in)</text>
        <dbReference type="Rhea" id="RHEA:71703"/>
        <dbReference type="ChEBI" id="CHEBI:36257"/>
    </reaction>
</comment>
<comment type="catalytic activity">
    <reaction evidence="11">
        <text>prostaglandin E1(out) = prostaglandin E1(in)</text>
        <dbReference type="Rhea" id="RHEA:50980"/>
        <dbReference type="ChEBI" id="CHEBI:57397"/>
    </reaction>
</comment>
<comment type="catalytic activity">
    <reaction evidence="11">
        <text>prostaglandin E2(out) = prostaglandin E2(in)</text>
        <dbReference type="Rhea" id="RHEA:50984"/>
        <dbReference type="ChEBI" id="CHEBI:606564"/>
    </reaction>
</comment>
<comment type="catalytic activity">
    <reaction evidence="11">
        <text>prostaglandin D2(out) = prostaglandin D2(in)</text>
        <dbReference type="Rhea" id="RHEA:50976"/>
        <dbReference type="ChEBI" id="CHEBI:57406"/>
    </reaction>
</comment>
<comment type="catalytic activity">
    <reaction evidence="11">
        <text>leukotriene C4(out) = leukotriene C4(in)</text>
        <dbReference type="Rhea" id="RHEA:72743"/>
        <dbReference type="ChEBI" id="CHEBI:57973"/>
    </reaction>
</comment>
<comment type="catalytic activity">
    <reaction evidence="1">
        <text>L-thyroxine(out) = L-thyroxine(in)</text>
        <dbReference type="Rhea" id="RHEA:71819"/>
        <dbReference type="ChEBI" id="CHEBI:58448"/>
    </reaction>
</comment>
<comment type="biophysicochemical properties">
    <kinetics>
        <KM evidence="6">35.5 uM for prostaglandin D2 (at pH 7.5)</KM>
        <KM evidence="6">3.2 uM for leukotriene C4 (at pH 7.5)</KM>
        <KM evidence="6">17.6 uM for taurocholate (at pH 7.5)</KM>
    </kinetics>
</comment>
<comment type="subcellular location">
    <subcellularLocation>
        <location evidence="1">Cell membrane</location>
        <topology evidence="10">Multi-pass membrane protein</topology>
    </subcellularLocation>
    <subcellularLocation>
        <location evidence="1">Basal cell membrane</location>
        <topology evidence="10">Multi-pass membrane protein</topology>
    </subcellularLocation>
    <subcellularLocation>
        <location evidence="1">Apical cell membrane</location>
        <topology evidence="10">Multi-pass membrane protein</topology>
    </subcellularLocation>
</comment>
<comment type="tissue specificity">
    <text evidence="6">Expressed in liver, kidney, heart, lung and retina. Widely distributed in all brain regions.</text>
</comment>
<comment type="domain">
    <text evidence="1">A conserved histidine residue in the third transmembrane domain (His-128) might play an essential role in the pH sensitivity of SLCO2B1/OATP2B1-mediated substrate transport. Transmembrane domain 1 (TM1) may be localized within the substrate binding pocket.</text>
</comment>
<comment type="miscellaneous">
    <text evidence="7">Most likely contributes to the absorption and the disposition of a wide range of drugs in the intestine and the liver.</text>
</comment>
<comment type="similarity">
    <text evidence="10">Belongs to the organo anion transporter (TC 2.A.60) family.</text>
</comment>
<comment type="caution">
    <text evidence="6 7">In contrast with human ortholog, not able to transport steroid sulfate conjugates estrone 3-sulfate (E1S), dehydroepiandrosterone sulfate (DHEA-S) and pregnenolone sulfate (PregS).</text>
</comment>
<sequence length="682" mass="74215">MPDRSTKATMGAEDIHERKVSMEPRDSHQDAQPRGMFQNIKFFVLCHSILQLAQLMISGYLKSSISTVEKRFGLSSQTSGLLAAFNEVGNISLILFVSYFGSRVHRPRMIGCGAILVAVAGLLMALPHFISEPYRYDHSSPDRSQDFEASLCLPTTMAPASALSNDSCSSRTETKHLTMVGIMFTAQTLLGIGGVPIQPFGISYIDDFAHHSNSPLYLGILFAITMMGPGLAYGLGSLMLRLYVDIDRMPEGGINLTTKDPRWVGAWWLGFLISAGLVVLAASPYFFFPREMPKEKYELHFRQKVLAGGASIGSKGEELSSQHEPLKKQAGLPQIAPDLTVVQFIKVFPRVLLRTLRHPIFLLVVLSQVCTSSMVAGTATFLPKFLERQFSITASFANLLLGCLTIPLAIVGIVVGGVLVKRLHLSPMQCSALCLLGSLLCLLLSLPLFFIGCSTHHIAGITQDLGAQPGPSLFPGCSEPCSCQSDDFNPVCDTSAYVEYTTPCHAGCTGRVVQEALDKSQVFYTNCSCVAGNGTISAGSCESACSRLVLPFILLISLGAAVASITHTPSFMLILRGVKKEDKTLAVGMQFMLLRVLAWMPSPVIHGSAIDTTCVHWALTCGRRAVCRYYDHDLLRNRFIGLQFFFKSGSLVCFALVLAILRQQSREASTKATVKSSDLQEL</sequence>